<proteinExistence type="inferred from homology"/>
<sequence length="371" mass="40625">MYNETPIKRRPSTRIYVGNVPIGDGAPIAVQSMTNTKTTDVEATIAQIRALEKVGADIVRVSVPTMDAAEAFKLIKQAVNVPLVADIHFDYRIALKVAEYGVDCLRINPGNIGNEERIRSVVECARDHNIPIRIGVNGGSLEKDLMDKYKEPTPQALLESAMRHVDILDRLNFDQFKVSVKASDVFLAVESYRLLAKQIRQPLHLGITEAGGARAGSVKSAVGLGMLLAEGIGDTLRISLAADPVEEIKVGFDILKSLRIRSRGINFIACPSCSRQEFDVISTVNELERRLEDVTTAMDVSIIGCVVNGPGEALVSHIGLTGGHNKSGYYDEGERQKERFDNDNIVDSLEAKIRAKASQMANRIQIKDTTE</sequence>
<dbReference type="EC" id="1.17.7.3" evidence="1"/>
<dbReference type="EMBL" id="CP001252">
    <property type="protein sequence ID" value="ACK45881.1"/>
    <property type="molecule type" value="Genomic_DNA"/>
</dbReference>
<dbReference type="RefSeq" id="WP_006082482.1">
    <property type="nucleotide sequence ID" value="NC_011663.1"/>
</dbReference>
<dbReference type="SMR" id="B8E9S7"/>
<dbReference type="GeneID" id="11773204"/>
<dbReference type="KEGG" id="sbp:Sbal223_1373"/>
<dbReference type="HOGENOM" id="CLU_042258_0_0_6"/>
<dbReference type="UniPathway" id="UPA00056">
    <property type="reaction ID" value="UER00096"/>
</dbReference>
<dbReference type="Proteomes" id="UP000002507">
    <property type="component" value="Chromosome"/>
</dbReference>
<dbReference type="GO" id="GO:0051539">
    <property type="term" value="F:4 iron, 4 sulfur cluster binding"/>
    <property type="evidence" value="ECO:0007669"/>
    <property type="project" value="UniProtKB-UniRule"/>
</dbReference>
<dbReference type="GO" id="GO:0046429">
    <property type="term" value="F:4-hydroxy-3-methylbut-2-en-1-yl diphosphate synthase activity (ferredoxin)"/>
    <property type="evidence" value="ECO:0007669"/>
    <property type="project" value="UniProtKB-UniRule"/>
</dbReference>
<dbReference type="GO" id="GO:0141197">
    <property type="term" value="F:4-hydroxy-3-methylbut-2-enyl-diphosphate synthase activity (flavodoxin)"/>
    <property type="evidence" value="ECO:0007669"/>
    <property type="project" value="UniProtKB-EC"/>
</dbReference>
<dbReference type="GO" id="GO:0005506">
    <property type="term" value="F:iron ion binding"/>
    <property type="evidence" value="ECO:0007669"/>
    <property type="project" value="InterPro"/>
</dbReference>
<dbReference type="GO" id="GO:0019288">
    <property type="term" value="P:isopentenyl diphosphate biosynthetic process, methylerythritol 4-phosphate pathway"/>
    <property type="evidence" value="ECO:0007669"/>
    <property type="project" value="UniProtKB-UniRule"/>
</dbReference>
<dbReference type="GO" id="GO:0016114">
    <property type="term" value="P:terpenoid biosynthetic process"/>
    <property type="evidence" value="ECO:0007669"/>
    <property type="project" value="InterPro"/>
</dbReference>
<dbReference type="FunFam" id="3.20.20.20:FF:000001">
    <property type="entry name" value="4-hydroxy-3-methylbut-2-en-1-yl diphosphate synthase (flavodoxin)"/>
    <property type="match status" value="1"/>
</dbReference>
<dbReference type="FunFam" id="3.30.413.10:FF:000002">
    <property type="entry name" value="4-hydroxy-3-methylbut-2-en-1-yl diphosphate synthase (flavodoxin)"/>
    <property type="match status" value="1"/>
</dbReference>
<dbReference type="Gene3D" id="3.20.20.20">
    <property type="entry name" value="Dihydropteroate synthase-like"/>
    <property type="match status" value="1"/>
</dbReference>
<dbReference type="Gene3D" id="3.30.413.10">
    <property type="entry name" value="Sulfite Reductase Hemoprotein, domain 1"/>
    <property type="match status" value="1"/>
</dbReference>
<dbReference type="HAMAP" id="MF_00159">
    <property type="entry name" value="IspG"/>
    <property type="match status" value="1"/>
</dbReference>
<dbReference type="InterPro" id="IPR011005">
    <property type="entry name" value="Dihydropteroate_synth-like_sf"/>
</dbReference>
<dbReference type="InterPro" id="IPR016425">
    <property type="entry name" value="IspG_bac"/>
</dbReference>
<dbReference type="InterPro" id="IPR004588">
    <property type="entry name" value="IspG_bac-typ"/>
</dbReference>
<dbReference type="InterPro" id="IPR045854">
    <property type="entry name" value="NO2/SO3_Rdtase_4Fe4S_sf"/>
</dbReference>
<dbReference type="NCBIfam" id="TIGR00612">
    <property type="entry name" value="ispG_gcpE"/>
    <property type="match status" value="1"/>
</dbReference>
<dbReference type="NCBIfam" id="NF001540">
    <property type="entry name" value="PRK00366.1"/>
    <property type="match status" value="1"/>
</dbReference>
<dbReference type="PANTHER" id="PTHR30454">
    <property type="entry name" value="4-HYDROXY-3-METHYLBUT-2-EN-1-YL DIPHOSPHATE SYNTHASE"/>
    <property type="match status" value="1"/>
</dbReference>
<dbReference type="PANTHER" id="PTHR30454:SF0">
    <property type="entry name" value="4-HYDROXY-3-METHYLBUT-2-EN-1-YL DIPHOSPHATE SYNTHASE (FERREDOXIN), CHLOROPLASTIC"/>
    <property type="match status" value="1"/>
</dbReference>
<dbReference type="Pfam" id="PF04551">
    <property type="entry name" value="GcpE"/>
    <property type="match status" value="1"/>
</dbReference>
<dbReference type="PIRSF" id="PIRSF004640">
    <property type="entry name" value="IspG"/>
    <property type="match status" value="1"/>
</dbReference>
<dbReference type="SUPFAM" id="SSF51717">
    <property type="entry name" value="Dihydropteroate synthetase-like"/>
    <property type="match status" value="1"/>
</dbReference>
<dbReference type="SUPFAM" id="SSF56014">
    <property type="entry name" value="Nitrite and sulphite reductase 4Fe-4S domain-like"/>
    <property type="match status" value="1"/>
</dbReference>
<protein>
    <recommendedName>
        <fullName evidence="1">4-hydroxy-3-methylbut-2-en-1-yl diphosphate synthase (flavodoxin)</fullName>
        <ecNumber evidence="1">1.17.7.3</ecNumber>
    </recommendedName>
    <alternativeName>
        <fullName evidence="1">1-hydroxy-2-methyl-2-(E)-butenyl 4-diphosphate synthase</fullName>
    </alternativeName>
</protein>
<reference key="1">
    <citation type="submission" date="2008-12" db="EMBL/GenBank/DDBJ databases">
        <title>Complete sequence of chromosome of Shewanella baltica OS223.</title>
        <authorList>
            <consortium name="US DOE Joint Genome Institute"/>
            <person name="Lucas S."/>
            <person name="Copeland A."/>
            <person name="Lapidus A."/>
            <person name="Glavina del Rio T."/>
            <person name="Dalin E."/>
            <person name="Tice H."/>
            <person name="Bruce D."/>
            <person name="Goodwin L."/>
            <person name="Pitluck S."/>
            <person name="Chertkov O."/>
            <person name="Meincke L."/>
            <person name="Brettin T."/>
            <person name="Detter J.C."/>
            <person name="Han C."/>
            <person name="Kuske C.R."/>
            <person name="Larimer F."/>
            <person name="Land M."/>
            <person name="Hauser L."/>
            <person name="Kyrpides N."/>
            <person name="Ovchinnikova G."/>
            <person name="Brettar I."/>
            <person name="Rodrigues J."/>
            <person name="Konstantinidis K."/>
            <person name="Tiedje J."/>
        </authorList>
    </citation>
    <scope>NUCLEOTIDE SEQUENCE [LARGE SCALE GENOMIC DNA]</scope>
    <source>
        <strain>OS223</strain>
    </source>
</reference>
<keyword id="KW-0004">4Fe-4S</keyword>
<keyword id="KW-0408">Iron</keyword>
<keyword id="KW-0411">Iron-sulfur</keyword>
<keyword id="KW-0414">Isoprene biosynthesis</keyword>
<keyword id="KW-0479">Metal-binding</keyword>
<keyword id="KW-0560">Oxidoreductase</keyword>
<name>ISPG_SHEB2</name>
<accession>B8E9S7</accession>
<gene>
    <name evidence="1" type="primary">ispG</name>
    <name type="ordered locus">Sbal223_1373</name>
</gene>
<comment type="function">
    <text evidence="1">Converts 2C-methyl-D-erythritol 2,4-cyclodiphosphate (ME-2,4cPP) into 1-hydroxy-2-methyl-2-(E)-butenyl 4-diphosphate.</text>
</comment>
<comment type="catalytic activity">
    <reaction evidence="1">
        <text>(2E)-4-hydroxy-3-methylbut-2-enyl diphosphate + oxidized [flavodoxin] + H2O + 2 H(+) = 2-C-methyl-D-erythritol 2,4-cyclic diphosphate + reduced [flavodoxin]</text>
        <dbReference type="Rhea" id="RHEA:43604"/>
        <dbReference type="Rhea" id="RHEA-COMP:10622"/>
        <dbReference type="Rhea" id="RHEA-COMP:10623"/>
        <dbReference type="ChEBI" id="CHEBI:15377"/>
        <dbReference type="ChEBI" id="CHEBI:15378"/>
        <dbReference type="ChEBI" id="CHEBI:57618"/>
        <dbReference type="ChEBI" id="CHEBI:58210"/>
        <dbReference type="ChEBI" id="CHEBI:58483"/>
        <dbReference type="ChEBI" id="CHEBI:128753"/>
        <dbReference type="EC" id="1.17.7.3"/>
    </reaction>
</comment>
<comment type="cofactor">
    <cofactor evidence="1">
        <name>[4Fe-4S] cluster</name>
        <dbReference type="ChEBI" id="CHEBI:49883"/>
    </cofactor>
    <text evidence="1">Binds 1 [4Fe-4S] cluster.</text>
</comment>
<comment type="pathway">
    <text evidence="1">Isoprenoid biosynthesis; isopentenyl diphosphate biosynthesis via DXP pathway; isopentenyl diphosphate from 1-deoxy-D-xylulose 5-phosphate: step 5/6.</text>
</comment>
<comment type="similarity">
    <text evidence="1">Belongs to the IspG family.</text>
</comment>
<evidence type="ECO:0000255" key="1">
    <source>
        <dbReference type="HAMAP-Rule" id="MF_00159"/>
    </source>
</evidence>
<organism>
    <name type="scientific">Shewanella baltica (strain OS223)</name>
    <dbReference type="NCBI Taxonomy" id="407976"/>
    <lineage>
        <taxon>Bacteria</taxon>
        <taxon>Pseudomonadati</taxon>
        <taxon>Pseudomonadota</taxon>
        <taxon>Gammaproteobacteria</taxon>
        <taxon>Alteromonadales</taxon>
        <taxon>Shewanellaceae</taxon>
        <taxon>Shewanella</taxon>
    </lineage>
</organism>
<feature type="chain" id="PRO_1000123459" description="4-hydroxy-3-methylbut-2-en-1-yl diphosphate synthase (flavodoxin)">
    <location>
        <begin position="1"/>
        <end position="371"/>
    </location>
</feature>
<feature type="binding site" evidence="1">
    <location>
        <position position="270"/>
    </location>
    <ligand>
        <name>[4Fe-4S] cluster</name>
        <dbReference type="ChEBI" id="CHEBI:49883"/>
    </ligand>
</feature>
<feature type="binding site" evidence="1">
    <location>
        <position position="273"/>
    </location>
    <ligand>
        <name>[4Fe-4S] cluster</name>
        <dbReference type="ChEBI" id="CHEBI:49883"/>
    </ligand>
</feature>
<feature type="binding site" evidence="1">
    <location>
        <position position="305"/>
    </location>
    <ligand>
        <name>[4Fe-4S] cluster</name>
        <dbReference type="ChEBI" id="CHEBI:49883"/>
    </ligand>
</feature>
<feature type="binding site" evidence="1">
    <location>
        <position position="312"/>
    </location>
    <ligand>
        <name>[4Fe-4S] cluster</name>
        <dbReference type="ChEBI" id="CHEBI:49883"/>
    </ligand>
</feature>